<name>RNC_SHEHH</name>
<dbReference type="EC" id="3.1.26.3" evidence="1"/>
<dbReference type="EMBL" id="CP000931">
    <property type="protein sequence ID" value="ABZ75652.1"/>
    <property type="molecule type" value="Genomic_DNA"/>
</dbReference>
<dbReference type="RefSeq" id="WP_012276198.1">
    <property type="nucleotide sequence ID" value="NC_010334.1"/>
</dbReference>
<dbReference type="SMR" id="B0TIV7"/>
<dbReference type="STRING" id="458817.Shal_1083"/>
<dbReference type="KEGG" id="shl:Shal_1083"/>
<dbReference type="eggNOG" id="COG0571">
    <property type="taxonomic scope" value="Bacteria"/>
</dbReference>
<dbReference type="HOGENOM" id="CLU_000907_1_1_6"/>
<dbReference type="OrthoDB" id="9805026at2"/>
<dbReference type="Proteomes" id="UP000001317">
    <property type="component" value="Chromosome"/>
</dbReference>
<dbReference type="GO" id="GO:0005737">
    <property type="term" value="C:cytoplasm"/>
    <property type="evidence" value="ECO:0007669"/>
    <property type="project" value="UniProtKB-SubCell"/>
</dbReference>
<dbReference type="GO" id="GO:0003725">
    <property type="term" value="F:double-stranded RNA binding"/>
    <property type="evidence" value="ECO:0007669"/>
    <property type="project" value="TreeGrafter"/>
</dbReference>
<dbReference type="GO" id="GO:0046872">
    <property type="term" value="F:metal ion binding"/>
    <property type="evidence" value="ECO:0007669"/>
    <property type="project" value="UniProtKB-KW"/>
</dbReference>
<dbReference type="GO" id="GO:0004525">
    <property type="term" value="F:ribonuclease III activity"/>
    <property type="evidence" value="ECO:0007669"/>
    <property type="project" value="UniProtKB-UniRule"/>
</dbReference>
<dbReference type="GO" id="GO:0019843">
    <property type="term" value="F:rRNA binding"/>
    <property type="evidence" value="ECO:0007669"/>
    <property type="project" value="UniProtKB-KW"/>
</dbReference>
<dbReference type="GO" id="GO:0006397">
    <property type="term" value="P:mRNA processing"/>
    <property type="evidence" value="ECO:0007669"/>
    <property type="project" value="UniProtKB-UniRule"/>
</dbReference>
<dbReference type="GO" id="GO:0010468">
    <property type="term" value="P:regulation of gene expression"/>
    <property type="evidence" value="ECO:0007669"/>
    <property type="project" value="TreeGrafter"/>
</dbReference>
<dbReference type="GO" id="GO:0006364">
    <property type="term" value="P:rRNA processing"/>
    <property type="evidence" value="ECO:0007669"/>
    <property type="project" value="UniProtKB-UniRule"/>
</dbReference>
<dbReference type="GO" id="GO:0008033">
    <property type="term" value="P:tRNA processing"/>
    <property type="evidence" value="ECO:0007669"/>
    <property type="project" value="UniProtKB-KW"/>
</dbReference>
<dbReference type="CDD" id="cd10845">
    <property type="entry name" value="DSRM_RNAse_III_family"/>
    <property type="match status" value="1"/>
</dbReference>
<dbReference type="CDD" id="cd00593">
    <property type="entry name" value="RIBOc"/>
    <property type="match status" value="1"/>
</dbReference>
<dbReference type="FunFam" id="1.10.1520.10:FF:000001">
    <property type="entry name" value="Ribonuclease 3"/>
    <property type="match status" value="1"/>
</dbReference>
<dbReference type="FunFam" id="3.30.160.20:FF:000003">
    <property type="entry name" value="Ribonuclease 3"/>
    <property type="match status" value="1"/>
</dbReference>
<dbReference type="Gene3D" id="3.30.160.20">
    <property type="match status" value="1"/>
</dbReference>
<dbReference type="Gene3D" id="1.10.1520.10">
    <property type="entry name" value="Ribonuclease III domain"/>
    <property type="match status" value="1"/>
</dbReference>
<dbReference type="HAMAP" id="MF_00104">
    <property type="entry name" value="RNase_III"/>
    <property type="match status" value="1"/>
</dbReference>
<dbReference type="InterPro" id="IPR014720">
    <property type="entry name" value="dsRBD_dom"/>
</dbReference>
<dbReference type="InterPro" id="IPR011907">
    <property type="entry name" value="RNase_III"/>
</dbReference>
<dbReference type="InterPro" id="IPR000999">
    <property type="entry name" value="RNase_III_dom"/>
</dbReference>
<dbReference type="InterPro" id="IPR036389">
    <property type="entry name" value="RNase_III_sf"/>
</dbReference>
<dbReference type="NCBIfam" id="TIGR02191">
    <property type="entry name" value="RNaseIII"/>
    <property type="match status" value="1"/>
</dbReference>
<dbReference type="PANTHER" id="PTHR11207:SF0">
    <property type="entry name" value="RIBONUCLEASE 3"/>
    <property type="match status" value="1"/>
</dbReference>
<dbReference type="PANTHER" id="PTHR11207">
    <property type="entry name" value="RIBONUCLEASE III"/>
    <property type="match status" value="1"/>
</dbReference>
<dbReference type="Pfam" id="PF00035">
    <property type="entry name" value="dsrm"/>
    <property type="match status" value="1"/>
</dbReference>
<dbReference type="Pfam" id="PF14622">
    <property type="entry name" value="Ribonucleas_3_3"/>
    <property type="match status" value="1"/>
</dbReference>
<dbReference type="SMART" id="SM00358">
    <property type="entry name" value="DSRM"/>
    <property type="match status" value="1"/>
</dbReference>
<dbReference type="SMART" id="SM00535">
    <property type="entry name" value="RIBOc"/>
    <property type="match status" value="1"/>
</dbReference>
<dbReference type="SUPFAM" id="SSF54768">
    <property type="entry name" value="dsRNA-binding domain-like"/>
    <property type="match status" value="1"/>
</dbReference>
<dbReference type="SUPFAM" id="SSF69065">
    <property type="entry name" value="RNase III domain-like"/>
    <property type="match status" value="1"/>
</dbReference>
<dbReference type="PROSITE" id="PS50137">
    <property type="entry name" value="DS_RBD"/>
    <property type="match status" value="1"/>
</dbReference>
<dbReference type="PROSITE" id="PS00517">
    <property type="entry name" value="RNASE_3_1"/>
    <property type="match status" value="1"/>
</dbReference>
<dbReference type="PROSITE" id="PS50142">
    <property type="entry name" value="RNASE_3_2"/>
    <property type="match status" value="1"/>
</dbReference>
<gene>
    <name evidence="1" type="primary">rnc</name>
    <name type="ordered locus">Shal_1083</name>
</gene>
<sequence>MEPIKNIPRLCRTLGYEFTEQAFLDQALTHRSASNKHNERLEFLGDSILSIVISDALYHQFPTATEGDLSRMRATLVCGKMLAEIAIEFKLGDYLKLGPGELKSGGFRRESILADAVEAIIGAIYLDSEIEKCRSLVLKWYESRLKVIEPINQKDPKTLLQEHLQKFRKPLPVYKVVHTEGDAHEQTFTVECIVEDLSQAVVGVASSRRKAEQSAAAQVLELMKK</sequence>
<proteinExistence type="inferred from homology"/>
<keyword id="KW-0963">Cytoplasm</keyword>
<keyword id="KW-0255">Endonuclease</keyword>
<keyword id="KW-0378">Hydrolase</keyword>
<keyword id="KW-0460">Magnesium</keyword>
<keyword id="KW-0479">Metal-binding</keyword>
<keyword id="KW-0507">mRNA processing</keyword>
<keyword id="KW-0540">Nuclease</keyword>
<keyword id="KW-0694">RNA-binding</keyword>
<keyword id="KW-0698">rRNA processing</keyword>
<keyword id="KW-0699">rRNA-binding</keyword>
<keyword id="KW-0819">tRNA processing</keyword>
<evidence type="ECO:0000255" key="1">
    <source>
        <dbReference type="HAMAP-Rule" id="MF_00104"/>
    </source>
</evidence>
<accession>B0TIV7</accession>
<organism>
    <name type="scientific">Shewanella halifaxensis (strain HAW-EB4)</name>
    <dbReference type="NCBI Taxonomy" id="458817"/>
    <lineage>
        <taxon>Bacteria</taxon>
        <taxon>Pseudomonadati</taxon>
        <taxon>Pseudomonadota</taxon>
        <taxon>Gammaproteobacteria</taxon>
        <taxon>Alteromonadales</taxon>
        <taxon>Shewanellaceae</taxon>
        <taxon>Shewanella</taxon>
    </lineage>
</organism>
<feature type="chain" id="PRO_1000075813" description="Ribonuclease 3">
    <location>
        <begin position="1"/>
        <end position="225"/>
    </location>
</feature>
<feature type="domain" description="RNase III" evidence="1">
    <location>
        <begin position="7"/>
        <end position="129"/>
    </location>
</feature>
<feature type="domain" description="DRBM" evidence="1">
    <location>
        <begin position="155"/>
        <end position="225"/>
    </location>
</feature>
<feature type="active site" evidence="1">
    <location>
        <position position="46"/>
    </location>
</feature>
<feature type="active site" evidence="1">
    <location>
        <position position="118"/>
    </location>
</feature>
<feature type="binding site" evidence="1">
    <location>
        <position position="42"/>
    </location>
    <ligand>
        <name>Mg(2+)</name>
        <dbReference type="ChEBI" id="CHEBI:18420"/>
    </ligand>
</feature>
<feature type="binding site" evidence="1">
    <location>
        <position position="115"/>
    </location>
    <ligand>
        <name>Mg(2+)</name>
        <dbReference type="ChEBI" id="CHEBI:18420"/>
    </ligand>
</feature>
<feature type="binding site" evidence="1">
    <location>
        <position position="118"/>
    </location>
    <ligand>
        <name>Mg(2+)</name>
        <dbReference type="ChEBI" id="CHEBI:18420"/>
    </ligand>
</feature>
<protein>
    <recommendedName>
        <fullName evidence="1">Ribonuclease 3</fullName>
        <ecNumber evidence="1">3.1.26.3</ecNumber>
    </recommendedName>
    <alternativeName>
        <fullName evidence="1">Ribonuclease III</fullName>
        <shortName evidence="1">RNase III</shortName>
    </alternativeName>
</protein>
<reference key="1">
    <citation type="submission" date="2008-01" db="EMBL/GenBank/DDBJ databases">
        <title>Complete sequence of Shewanella halifaxensis HAW-EB4.</title>
        <authorList>
            <consortium name="US DOE Joint Genome Institute"/>
            <person name="Copeland A."/>
            <person name="Lucas S."/>
            <person name="Lapidus A."/>
            <person name="Glavina del Rio T."/>
            <person name="Dalin E."/>
            <person name="Tice H."/>
            <person name="Bruce D."/>
            <person name="Goodwin L."/>
            <person name="Pitluck S."/>
            <person name="Sims D."/>
            <person name="Brettin T."/>
            <person name="Detter J.C."/>
            <person name="Han C."/>
            <person name="Kuske C.R."/>
            <person name="Schmutz J."/>
            <person name="Larimer F."/>
            <person name="Land M."/>
            <person name="Hauser L."/>
            <person name="Kyrpides N."/>
            <person name="Kim E."/>
            <person name="Zhao J.-S."/>
            <person name="Richardson P."/>
        </authorList>
    </citation>
    <scope>NUCLEOTIDE SEQUENCE [LARGE SCALE GENOMIC DNA]</scope>
    <source>
        <strain>HAW-EB4</strain>
    </source>
</reference>
<comment type="function">
    <text evidence="1">Digests double-stranded RNA. Involved in the processing of primary rRNA transcript to yield the immediate precursors to the large and small rRNAs (23S and 16S). Processes some mRNAs, and tRNAs when they are encoded in the rRNA operon. Processes pre-crRNA and tracrRNA of type II CRISPR loci if present in the organism.</text>
</comment>
<comment type="catalytic activity">
    <reaction evidence="1">
        <text>Endonucleolytic cleavage to 5'-phosphomonoester.</text>
        <dbReference type="EC" id="3.1.26.3"/>
    </reaction>
</comment>
<comment type="cofactor">
    <cofactor evidence="1">
        <name>Mg(2+)</name>
        <dbReference type="ChEBI" id="CHEBI:18420"/>
    </cofactor>
</comment>
<comment type="subunit">
    <text evidence="1">Homodimer.</text>
</comment>
<comment type="subcellular location">
    <subcellularLocation>
        <location evidence="1">Cytoplasm</location>
    </subcellularLocation>
</comment>
<comment type="similarity">
    <text evidence="1">Belongs to the ribonuclease III family.</text>
</comment>